<proteinExistence type="inferred from homology"/>
<name>GPMA_BRUAB</name>
<keyword id="KW-0312">Gluconeogenesis</keyword>
<keyword id="KW-0324">Glycolysis</keyword>
<keyword id="KW-0413">Isomerase</keyword>
<evidence type="ECO:0000255" key="1">
    <source>
        <dbReference type="HAMAP-Rule" id="MF_01039"/>
    </source>
</evidence>
<gene>
    <name evidence="1" type="primary">gpmA</name>
    <name type="ordered locus">BruAb2_0992</name>
</gene>
<sequence>MSRTLVLVRHGQSEWNLKNLFTGWRDPGLTEQGHAEAKAAGQRLKAAGLKFDIAYTSALSRAQVTCQHILDELGQPGLETIRDQALNERDYGDLSGLNKDDARAKWGEEQVHIWRRSYDVPPPGGESLKDTGARVWPYYLHTIQPHVLREETVLVAAHGNSLRALIMALDGLTPEQILKQELNTGVPIIYRLNADSTVASKEILSA</sequence>
<accession>Q576R3</accession>
<dbReference type="EC" id="5.4.2.11" evidence="1"/>
<dbReference type="EMBL" id="AE017224">
    <property type="protein sequence ID" value="AAX76371.1"/>
    <property type="molecule type" value="Genomic_DNA"/>
</dbReference>
<dbReference type="RefSeq" id="WP_002965600.1">
    <property type="nucleotide sequence ID" value="NC_006933.1"/>
</dbReference>
<dbReference type="SMR" id="Q576R3"/>
<dbReference type="EnsemblBacteria" id="AAX76371">
    <property type="protein sequence ID" value="AAX76371"/>
    <property type="gene ID" value="BruAb2_0992"/>
</dbReference>
<dbReference type="KEGG" id="bmb:BruAb2_0992"/>
<dbReference type="HOGENOM" id="CLU_033323_1_4_5"/>
<dbReference type="UniPathway" id="UPA00109">
    <property type="reaction ID" value="UER00186"/>
</dbReference>
<dbReference type="Proteomes" id="UP000000540">
    <property type="component" value="Chromosome II"/>
</dbReference>
<dbReference type="GO" id="GO:0004619">
    <property type="term" value="F:phosphoglycerate mutase activity"/>
    <property type="evidence" value="ECO:0007669"/>
    <property type="project" value="UniProtKB-EC"/>
</dbReference>
<dbReference type="GO" id="GO:0006094">
    <property type="term" value="P:gluconeogenesis"/>
    <property type="evidence" value="ECO:0007669"/>
    <property type="project" value="UniProtKB-UniRule"/>
</dbReference>
<dbReference type="GO" id="GO:0006096">
    <property type="term" value="P:glycolytic process"/>
    <property type="evidence" value="ECO:0007669"/>
    <property type="project" value="UniProtKB-UniRule"/>
</dbReference>
<dbReference type="CDD" id="cd07067">
    <property type="entry name" value="HP_PGM_like"/>
    <property type="match status" value="1"/>
</dbReference>
<dbReference type="Gene3D" id="3.40.50.1240">
    <property type="entry name" value="Phosphoglycerate mutase-like"/>
    <property type="match status" value="1"/>
</dbReference>
<dbReference type="HAMAP" id="MF_01039">
    <property type="entry name" value="PGAM_GpmA"/>
    <property type="match status" value="1"/>
</dbReference>
<dbReference type="InterPro" id="IPR013078">
    <property type="entry name" value="His_Pase_superF_clade-1"/>
</dbReference>
<dbReference type="InterPro" id="IPR029033">
    <property type="entry name" value="His_PPase_superfam"/>
</dbReference>
<dbReference type="InterPro" id="IPR001345">
    <property type="entry name" value="PG/BPGM_mutase_AS"/>
</dbReference>
<dbReference type="InterPro" id="IPR005952">
    <property type="entry name" value="Phosphogly_mut1"/>
</dbReference>
<dbReference type="NCBIfam" id="TIGR01258">
    <property type="entry name" value="pgm_1"/>
    <property type="match status" value="1"/>
</dbReference>
<dbReference type="NCBIfam" id="NF002339">
    <property type="entry name" value="PRK01295.1"/>
    <property type="match status" value="1"/>
</dbReference>
<dbReference type="PANTHER" id="PTHR11931">
    <property type="entry name" value="PHOSPHOGLYCERATE MUTASE"/>
    <property type="match status" value="1"/>
</dbReference>
<dbReference type="Pfam" id="PF00300">
    <property type="entry name" value="His_Phos_1"/>
    <property type="match status" value="1"/>
</dbReference>
<dbReference type="PIRSF" id="PIRSF000709">
    <property type="entry name" value="6PFK_2-Ptase"/>
    <property type="match status" value="1"/>
</dbReference>
<dbReference type="SMART" id="SM00855">
    <property type="entry name" value="PGAM"/>
    <property type="match status" value="1"/>
</dbReference>
<dbReference type="SUPFAM" id="SSF53254">
    <property type="entry name" value="Phosphoglycerate mutase-like"/>
    <property type="match status" value="1"/>
</dbReference>
<dbReference type="PROSITE" id="PS00175">
    <property type="entry name" value="PG_MUTASE"/>
    <property type="match status" value="1"/>
</dbReference>
<feature type="chain" id="PRO_0000229109" description="2,3-bisphosphoglycerate-dependent phosphoglycerate mutase">
    <location>
        <begin position="1"/>
        <end position="206"/>
    </location>
</feature>
<feature type="active site" description="Tele-phosphohistidine intermediate" evidence="1">
    <location>
        <position position="10"/>
    </location>
</feature>
<feature type="active site" description="Proton donor/acceptor" evidence="1">
    <location>
        <position position="88"/>
    </location>
</feature>
<feature type="binding site" evidence="1">
    <location>
        <begin position="9"/>
        <end position="16"/>
    </location>
    <ligand>
        <name>substrate</name>
    </ligand>
</feature>
<feature type="binding site" evidence="1">
    <location>
        <begin position="22"/>
        <end position="23"/>
    </location>
    <ligand>
        <name>substrate</name>
    </ligand>
</feature>
<feature type="binding site" evidence="1">
    <location>
        <position position="61"/>
    </location>
    <ligand>
        <name>substrate</name>
    </ligand>
</feature>
<feature type="binding site" evidence="1">
    <location>
        <begin position="88"/>
        <end position="91"/>
    </location>
    <ligand>
        <name>substrate</name>
    </ligand>
</feature>
<feature type="binding site" evidence="1">
    <location>
        <position position="99"/>
    </location>
    <ligand>
        <name>substrate</name>
    </ligand>
</feature>
<feature type="binding site" evidence="1">
    <location>
        <begin position="115"/>
        <end position="116"/>
    </location>
    <ligand>
        <name>substrate</name>
    </ligand>
</feature>
<feature type="binding site" evidence="1">
    <location>
        <begin position="159"/>
        <end position="160"/>
    </location>
    <ligand>
        <name>substrate</name>
    </ligand>
</feature>
<feature type="site" description="Transition state stabilizer" evidence="1">
    <location>
        <position position="158"/>
    </location>
</feature>
<organism>
    <name type="scientific">Brucella abortus biovar 1 (strain 9-941)</name>
    <dbReference type="NCBI Taxonomy" id="262698"/>
    <lineage>
        <taxon>Bacteria</taxon>
        <taxon>Pseudomonadati</taxon>
        <taxon>Pseudomonadota</taxon>
        <taxon>Alphaproteobacteria</taxon>
        <taxon>Hyphomicrobiales</taxon>
        <taxon>Brucellaceae</taxon>
        <taxon>Brucella/Ochrobactrum group</taxon>
        <taxon>Brucella</taxon>
    </lineage>
</organism>
<protein>
    <recommendedName>
        <fullName evidence="1">2,3-bisphosphoglycerate-dependent phosphoglycerate mutase</fullName>
        <shortName evidence="1">BPG-dependent PGAM</shortName>
        <shortName evidence="1">PGAM</shortName>
        <shortName evidence="1">Phosphoglyceromutase</shortName>
        <shortName evidence="1">dPGM</shortName>
        <ecNumber evidence="1">5.4.2.11</ecNumber>
    </recommendedName>
</protein>
<reference key="1">
    <citation type="journal article" date="2005" name="J. Bacteriol.">
        <title>Completion of the genome sequence of Brucella abortus and comparison to the highly similar genomes of Brucella melitensis and Brucella suis.</title>
        <authorList>
            <person name="Halling S.M."/>
            <person name="Peterson-Burch B.D."/>
            <person name="Bricker B.J."/>
            <person name="Zuerner R.L."/>
            <person name="Qing Z."/>
            <person name="Li L.-L."/>
            <person name="Kapur V."/>
            <person name="Alt D.P."/>
            <person name="Olsen S.C."/>
        </authorList>
    </citation>
    <scope>NUCLEOTIDE SEQUENCE [LARGE SCALE GENOMIC DNA]</scope>
    <source>
        <strain>9-941</strain>
    </source>
</reference>
<comment type="function">
    <text evidence="1">Catalyzes the interconversion of 2-phosphoglycerate and 3-phosphoglycerate.</text>
</comment>
<comment type="catalytic activity">
    <reaction evidence="1">
        <text>(2R)-2-phosphoglycerate = (2R)-3-phosphoglycerate</text>
        <dbReference type="Rhea" id="RHEA:15901"/>
        <dbReference type="ChEBI" id="CHEBI:58272"/>
        <dbReference type="ChEBI" id="CHEBI:58289"/>
        <dbReference type="EC" id="5.4.2.11"/>
    </reaction>
</comment>
<comment type="pathway">
    <text evidence="1">Carbohydrate degradation; glycolysis; pyruvate from D-glyceraldehyde 3-phosphate: step 3/5.</text>
</comment>
<comment type="subunit">
    <text evidence="1">Homodimer.</text>
</comment>
<comment type="similarity">
    <text evidence="1">Belongs to the phosphoglycerate mutase family. BPG-dependent PGAM subfamily.</text>
</comment>